<gene>
    <name type="ordered locus">CCA_00454</name>
</gene>
<proteinExistence type="inferred from homology"/>
<protein>
    <recommendedName>
        <fullName>Uncharacterized protein CCA_00454</fullName>
    </recommendedName>
    <alternativeName>
        <fullName>ORFF</fullName>
    </alternativeName>
</protein>
<feature type="chain" id="PRO_0000157370" description="Uncharacterized protein CCA_00454">
    <location>
        <begin position="1"/>
        <end position="581"/>
    </location>
</feature>
<organism>
    <name type="scientific">Chlamydia caviae (strain ATCC VR-813 / DSM 19441 / 03DC25 / GPIC)</name>
    <name type="common">Chlamydophila caviae</name>
    <dbReference type="NCBI Taxonomy" id="227941"/>
    <lineage>
        <taxon>Bacteria</taxon>
        <taxon>Pseudomonadati</taxon>
        <taxon>Chlamydiota</taxon>
        <taxon>Chlamydiia</taxon>
        <taxon>Chlamydiales</taxon>
        <taxon>Chlamydiaceae</taxon>
        <taxon>Chlamydia/Chlamydophila group</taxon>
        <taxon>Chlamydia</taxon>
    </lineage>
</organism>
<reference key="1">
    <citation type="journal article" date="1997" name="Mol. Microbiol.">
        <title>Type III secretion genes identify a putative virulence locus of Chlamydia.</title>
        <authorList>
            <person name="Hsia R.-C."/>
            <person name="Pannekoek Y."/>
            <person name="Ingerowski E."/>
            <person name="Bavoil P.M."/>
        </authorList>
    </citation>
    <scope>NUCLEOTIDE SEQUENCE [GENOMIC DNA]</scope>
    <source>
        <strain>ATCC VR-813 / DSM 19441 / 03DC25 / GPIC</strain>
    </source>
</reference>
<reference key="2">
    <citation type="journal article" date="2003" name="Nucleic Acids Res.">
        <title>Genome sequence of Chlamydophila caviae (Chlamydia psittaci GPIC): examining the role of niche-specific genes in the evolution of the Chlamydiaceae.</title>
        <authorList>
            <person name="Read T.D."/>
            <person name="Myers G.S.A."/>
            <person name="Brunham R.C."/>
            <person name="Nelson W.C."/>
            <person name="Paulsen I.T."/>
            <person name="Heidelberg J.F."/>
            <person name="Holtzapple E.K."/>
            <person name="Khouri H.M."/>
            <person name="Federova N.B."/>
            <person name="Carty H.A."/>
            <person name="Umayam L.A."/>
            <person name="Haft D.H."/>
            <person name="Peterson J.D."/>
            <person name="Beanan M.J."/>
            <person name="White O."/>
            <person name="Salzberg S.L."/>
            <person name="Hsia R.-C."/>
            <person name="McClarty G."/>
            <person name="Rank R.G."/>
            <person name="Bavoil P.M."/>
            <person name="Fraser C.M."/>
        </authorList>
    </citation>
    <scope>NUCLEOTIDE SEQUENCE [LARGE SCALE GENOMIC DNA]</scope>
    <source>
        <strain>ATCC VR-813 / DSM 19441 / 03DC25 / GPIC</strain>
    </source>
</reference>
<accession>O34023</accession>
<evidence type="ECO:0000305" key="1"/>
<comment type="similarity">
    <text evidence="1">Belongs to the UbiD family.</text>
</comment>
<name>Y454_CHLCV</name>
<sequence length="581" mass="66208">MAMSSLRRLVSLLRSQNDLIDIFAPVDPYLELPEIHRRVIENQGPALLFHNVQGASFPVLTNLFGTQKRVDQIFSKVPKGLIPQVIHLLSSPPKLSQLWKHRNLLLRGLSLGLRKARFLKFPHKKMASVDLHQLPMLTSWPEDGGAFLTLPLVYTESPSSKIPNLGMYRMQRFDRDTLGLHFQIQKGGGMHFYEAEQKNENLPVTVFLSGNPFLILSAIAPLPENISELLLCTFLQGSKLHYKNDPDTPHPLLYDSEFILIGEGICNERRPEGPFGDHFGYYSLQHDFPAFKCRKIYHRKDAIYPATIVGKPYQEDFYLGNKLQEYLSPLFPMVMPGVRQLKSYGEAGFHALTGAVVKERYWKESLATSLRILGEGQLSLTKFLMITDHHVDLDNFPKLLETILSRIVPERDLIIFSETSNDTLDYTGPKLNKGSKAIFMGIGPAIRDLPHKYRGKSLPNITNMGTFCPGCLVLETTLQQVNIDALLNHPDLSSWPLVVLTENLNETLASSKDFLWKTFTRLAPATDLHVRFSNVAHHRPNYTFPILLNSLMKPHYPKEVEADETTIQKVSHRWNEYFPKY</sequence>
<dbReference type="EMBL" id="U88070">
    <property type="protein sequence ID" value="AAB71513.1"/>
    <property type="molecule type" value="Genomic_DNA"/>
</dbReference>
<dbReference type="EMBL" id="AE015925">
    <property type="protein sequence ID" value="AAP05200.1"/>
    <property type="molecule type" value="Genomic_DNA"/>
</dbReference>
<dbReference type="SMR" id="O34023"/>
<dbReference type="STRING" id="227941.CCA_00454"/>
<dbReference type="KEGG" id="cca:CCA_00454"/>
<dbReference type="eggNOG" id="COG0043">
    <property type="taxonomic scope" value="Bacteria"/>
</dbReference>
<dbReference type="HOGENOM" id="CLU_023348_4_1_0"/>
<dbReference type="Proteomes" id="UP000002193">
    <property type="component" value="Chromosome"/>
</dbReference>
<dbReference type="GO" id="GO:0005737">
    <property type="term" value="C:cytoplasm"/>
    <property type="evidence" value="ECO:0007669"/>
    <property type="project" value="TreeGrafter"/>
</dbReference>
<dbReference type="GO" id="GO:0016831">
    <property type="term" value="F:carboxy-lyase activity"/>
    <property type="evidence" value="ECO:0007669"/>
    <property type="project" value="InterPro"/>
</dbReference>
<dbReference type="Gene3D" id="3.40.1670.10">
    <property type="entry name" value="UbiD C-terminal domain-like"/>
    <property type="match status" value="1"/>
</dbReference>
<dbReference type="InterPro" id="IPR022390">
    <property type="entry name" value="HBDC"/>
</dbReference>
<dbReference type="InterPro" id="IPR002830">
    <property type="entry name" value="UbiD"/>
</dbReference>
<dbReference type="InterPro" id="IPR049381">
    <property type="entry name" value="UbiD-like_C"/>
</dbReference>
<dbReference type="InterPro" id="IPR049383">
    <property type="entry name" value="UbiD-like_N"/>
</dbReference>
<dbReference type="InterPro" id="IPR048304">
    <property type="entry name" value="UbiD_Rift_dom"/>
</dbReference>
<dbReference type="NCBIfam" id="TIGR03701">
    <property type="entry name" value="mena_SCO4490"/>
    <property type="match status" value="1"/>
</dbReference>
<dbReference type="NCBIfam" id="TIGR00148">
    <property type="entry name" value="UbiD family decarboxylase"/>
    <property type="match status" value="1"/>
</dbReference>
<dbReference type="PANTHER" id="PTHR30108">
    <property type="entry name" value="3-OCTAPRENYL-4-HYDROXYBENZOATE CARBOXY-LYASE-RELATED"/>
    <property type="match status" value="1"/>
</dbReference>
<dbReference type="PANTHER" id="PTHR30108:SF7">
    <property type="entry name" value="3-POLYPRENYL-4-HYDROXYBENZOATE DECARBOXYLASE"/>
    <property type="match status" value="1"/>
</dbReference>
<dbReference type="Pfam" id="PF01977">
    <property type="entry name" value="UbiD"/>
    <property type="match status" value="1"/>
</dbReference>
<dbReference type="Pfam" id="PF20696">
    <property type="entry name" value="UbiD_C"/>
    <property type="match status" value="1"/>
</dbReference>
<dbReference type="Pfam" id="PF20695">
    <property type="entry name" value="UbiD_N"/>
    <property type="match status" value="1"/>
</dbReference>
<dbReference type="SUPFAM" id="SSF50475">
    <property type="entry name" value="FMN-binding split barrel"/>
    <property type="match status" value="1"/>
</dbReference>
<dbReference type="SUPFAM" id="SSF143968">
    <property type="entry name" value="UbiD C-terminal domain-like"/>
    <property type="match status" value="2"/>
</dbReference>